<sequence>MKFQSTLLLAAAAGSALAVPHGSGHKKRASVFEWFGSNESGAEFGTNIPGVWGTDYIFPDPSTISTLIGKGMNFFRVQFMMERLLPDSMTGSYDEEYLANLTTVVKAVTDGGAHALIDPHNYGRYNGEIISSTSDFQTFWQNLAGQYKDNDLVMFDTNNEYYDMDQDLVLNLNQAAINGIRAAGASQYIFVEGNSWTGAWTWVDVNDNMKNLTDPEDKIVYEMHQYLDSDGSGTSETCVSGTIGKERITDATQWLKDNKKVGFIGEYAGGSNDVCRSAVSGMLEYMANNTDVWKGASWWAAGPWWGDYIFSLEPPDGTAYTGMLDILETYL</sequence>
<accession>O74706</accession>
<accession>Q9C3Z7</accession>
<reference key="1">
    <citation type="journal article" date="1998" name="Appl. Environ. Microbiol.">
        <title>The transcriptional activator XlnR regulates both xylanolytic and endoglucanase gene expression in Aspergillus niger.</title>
        <authorList>
            <person name="van Peij N.N."/>
            <person name="Gielkens M.M."/>
            <person name="de Vries R.P."/>
            <person name="Visser J."/>
            <person name="de Graaff L.H."/>
        </authorList>
    </citation>
    <scope>NUCLEOTIDE SEQUENCE [GENOMIC DNA]</scope>
    <scope>INDUCTION</scope>
    <source>
        <strain>ATCC 9029 / NRRL 3 / CBS 120.49 / DSM 2466 / N400 / FGSC 732</strain>
    </source>
</reference>
<reference key="2">
    <citation type="journal article" date="2001" name="J. Biosci. Bioeng.">
        <title>Cloning of a gene encoding a highly stable endo-beta-1,4-glucanase from Aspergillus niger and its expression in yeast.</title>
        <authorList>
            <person name="Hong J."/>
            <person name="Tamaki H."/>
            <person name="Akiba S."/>
            <person name="Yamamoto K."/>
            <person name="Kumagai H."/>
        </authorList>
    </citation>
    <scope>NUCLEOTIDE SEQUENCE [MRNA]</scope>
    <scope>FUNCTION</scope>
    <scope>BIOPHYSICOCHEMICAL PROPERTIES</scope>
    <source>
        <strain>IFO 31125</strain>
    </source>
</reference>
<reference key="3">
    <citation type="submission" date="2009-06" db="EMBL/GenBank/DDBJ databases">
        <authorList>
            <person name="Hsing-Ren W."/>
            <person name="Trong-Rong Y."/>
        </authorList>
    </citation>
    <scope>NUCLEOTIDE SEQUENCE [GENOMIC DNA]</scope>
    <source>
        <strain>BCRC 31494</strain>
    </source>
</reference>
<keyword id="KW-0002">3D-structure</keyword>
<keyword id="KW-0119">Carbohydrate metabolism</keyword>
<keyword id="KW-0136">Cellulose degradation</keyword>
<keyword id="KW-0325">Glycoprotein</keyword>
<keyword id="KW-0326">Glycosidase</keyword>
<keyword id="KW-0378">Hydrolase</keyword>
<keyword id="KW-0624">Polysaccharide degradation</keyword>
<keyword id="KW-0964">Secreted</keyword>
<keyword id="KW-0732">Signal</keyword>
<proteinExistence type="evidence at protein level"/>
<gene>
    <name type="primary">eglB</name>
    <name type="synonym">eng1</name>
</gene>
<feature type="signal peptide" evidence="2">
    <location>
        <begin position="1"/>
        <end position="18"/>
    </location>
</feature>
<feature type="chain" id="PRO_5000065052" description="Endo-beta-1,4-glucanase B">
    <location>
        <begin position="19"/>
        <end position="331"/>
    </location>
</feature>
<feature type="active site" description="Proton donor" evidence="1">
    <location>
        <position position="160"/>
    </location>
</feature>
<feature type="active site" description="Nucleophile" evidence="1">
    <location>
        <position position="266"/>
    </location>
</feature>
<feature type="glycosylation site" description="N-linked (GlcNAc...) asparagine" evidence="2">
    <location>
        <position position="38"/>
    </location>
</feature>
<feature type="glycosylation site" description="N-linked (GlcNAc...) asparagine" evidence="2">
    <location>
        <position position="100"/>
    </location>
</feature>
<feature type="glycosylation site" description="N-linked (GlcNAc...) asparagine" evidence="2">
    <location>
        <position position="211"/>
    </location>
</feature>
<feature type="glycosylation site" description="N-linked (GlcNAc...) asparagine" evidence="2">
    <location>
        <position position="288"/>
    </location>
</feature>
<feature type="sequence conflict" description="In Ref. 2; AAG50051." evidence="5" ref="2">
    <original>A</original>
    <variation>G</variation>
    <location>
        <position position="13"/>
    </location>
</feature>
<feature type="sequence conflict" description="In Ref. 2; AAG50051." evidence="5" ref="2">
    <original>S</original>
    <variation>P</variation>
    <location>
        <position position="23"/>
    </location>
</feature>
<feature type="sequence conflict" description="In Ref. 2; AAG50051." evidence="5" ref="2">
    <original>T</original>
    <variation>A</variation>
    <location>
        <position position="63"/>
    </location>
</feature>
<feature type="sequence conflict" description="In Ref. 2; AAG50051." evidence="5" ref="2">
    <original>G</original>
    <variation>D</variation>
    <location>
        <position position="69"/>
    </location>
</feature>
<feature type="sequence conflict" description="In Ref. 2; AAG50051." evidence="5" ref="2">
    <original>V</original>
    <variation>I</variation>
    <location>
        <position position="105"/>
    </location>
</feature>
<feature type="sequence conflict" description="In Ref. 2; AAG50051." evidence="5" ref="2">
    <original>I</original>
    <variation>V</variation>
    <location>
        <position position="117"/>
    </location>
</feature>
<feature type="sequence conflict" description="In Ref. 2; AAG50051." evidence="5" ref="2">
    <original>Q</original>
    <variation>E</variation>
    <location>
        <position position="141"/>
    </location>
</feature>
<feature type="sequence conflict" description="In Ref. 2; AAG50051." evidence="5" ref="2">
    <original>Y</original>
    <variation>H</variation>
    <location>
        <position position="162"/>
    </location>
</feature>
<feature type="sequence conflict" description="In Ref. 2; AAG50051." evidence="5" ref="2">
    <original>A</original>
    <variation>AT</variation>
    <location>
        <position position="185"/>
    </location>
</feature>
<feature type="sequence conflict" description="In Ref. 2; AAG50051." evidence="5" ref="2">
    <original>G</original>
    <variation>E</variation>
    <location>
        <position position="241"/>
    </location>
</feature>
<feature type="sequence conflict" description="In Ref. 2; AAG50051." evidence="5" ref="2">
    <original>ITD</original>
    <variation>VTE</variation>
    <location>
        <begin position="248"/>
        <end position="250"/>
    </location>
</feature>
<feature type="sequence conflict" description="In Ref. 2; AAG50051." evidence="5" ref="2">
    <original>T</original>
    <variation>A</variation>
    <location>
        <position position="329"/>
    </location>
</feature>
<feature type="strand" evidence="6">
    <location>
        <begin position="32"/>
        <end position="39"/>
    </location>
</feature>
<feature type="strand" evidence="7">
    <location>
        <begin position="45"/>
        <end position="49"/>
    </location>
</feature>
<feature type="turn" evidence="6">
    <location>
        <begin position="52"/>
        <end position="54"/>
    </location>
</feature>
<feature type="helix" evidence="6">
    <location>
        <begin position="61"/>
        <end position="69"/>
    </location>
</feature>
<feature type="strand" evidence="6">
    <location>
        <begin position="74"/>
        <end position="79"/>
    </location>
</feature>
<feature type="helix" evidence="6">
    <location>
        <begin position="81"/>
        <end position="84"/>
    </location>
</feature>
<feature type="helix" evidence="6">
    <location>
        <begin position="95"/>
        <end position="110"/>
    </location>
</feature>
<feature type="strand" evidence="6">
    <location>
        <begin position="114"/>
        <end position="119"/>
    </location>
</feature>
<feature type="helix" evidence="6">
    <location>
        <begin position="133"/>
        <end position="147"/>
    </location>
</feature>
<feature type="strand" evidence="6">
    <location>
        <begin position="153"/>
        <end position="156"/>
    </location>
</feature>
<feature type="helix" evidence="6">
    <location>
        <begin position="166"/>
        <end position="182"/>
    </location>
</feature>
<feature type="strand" evidence="6">
    <location>
        <begin position="189"/>
        <end position="192"/>
    </location>
</feature>
<feature type="turn" evidence="6">
    <location>
        <begin position="194"/>
        <end position="197"/>
    </location>
</feature>
<feature type="turn" evidence="6">
    <location>
        <begin position="199"/>
        <end position="201"/>
    </location>
</feature>
<feature type="helix" evidence="6">
    <location>
        <begin position="202"/>
        <end position="205"/>
    </location>
</feature>
<feature type="helix" evidence="6">
    <location>
        <begin position="207"/>
        <end position="211"/>
    </location>
</feature>
<feature type="strand" evidence="6">
    <location>
        <begin position="219"/>
        <end position="226"/>
    </location>
</feature>
<feature type="strand" evidence="6">
    <location>
        <begin position="231"/>
        <end position="233"/>
    </location>
</feature>
<feature type="helix" evidence="6">
    <location>
        <begin position="243"/>
        <end position="258"/>
    </location>
</feature>
<feature type="strand" evidence="6">
    <location>
        <begin position="262"/>
        <end position="268"/>
    </location>
</feature>
<feature type="helix" evidence="6">
    <location>
        <begin position="273"/>
        <end position="287"/>
    </location>
</feature>
<feature type="turn" evidence="6">
    <location>
        <begin position="290"/>
        <end position="292"/>
    </location>
</feature>
<feature type="strand" evidence="6">
    <location>
        <begin position="293"/>
        <end position="301"/>
    </location>
</feature>
<feature type="turn" evidence="6">
    <location>
        <begin position="314"/>
        <end position="316"/>
    </location>
</feature>
<feature type="helix" evidence="6">
    <location>
        <begin position="318"/>
        <end position="327"/>
    </location>
</feature>
<feature type="helix" evidence="6">
    <location>
        <begin position="328"/>
        <end position="330"/>
    </location>
</feature>
<protein>
    <recommendedName>
        <fullName>Endo-beta-1,4-glucanase B</fullName>
        <shortName>Endoglucanase B</shortName>
        <ecNumber>3.2.1.4</ecNumber>
    </recommendedName>
    <alternativeName>
        <fullName>Carboxymethylcellulase B</fullName>
    </alternativeName>
    <alternativeName>
        <fullName>Cellulase B</fullName>
    </alternativeName>
</protein>
<organism>
    <name type="scientific">Aspergillus niger</name>
    <dbReference type="NCBI Taxonomy" id="5061"/>
    <lineage>
        <taxon>Eukaryota</taxon>
        <taxon>Fungi</taxon>
        <taxon>Dikarya</taxon>
        <taxon>Ascomycota</taxon>
        <taxon>Pezizomycotina</taxon>
        <taxon>Eurotiomycetes</taxon>
        <taxon>Eurotiomycetidae</taxon>
        <taxon>Eurotiales</taxon>
        <taxon>Aspergillaceae</taxon>
        <taxon>Aspergillus</taxon>
        <taxon>Aspergillus subgen. Circumdati</taxon>
    </lineage>
</organism>
<dbReference type="EC" id="3.2.1.4"/>
<dbReference type="EMBL" id="GQ292753">
    <property type="protein sequence ID" value="ACT68011.1"/>
    <property type="molecule type" value="Genomic_DNA"/>
</dbReference>
<dbReference type="EMBL" id="AF331518">
    <property type="protein sequence ID" value="AAG50051.1"/>
    <property type="molecule type" value="mRNA"/>
</dbReference>
<dbReference type="EMBL" id="AJ224452">
    <property type="protein sequence ID" value="CAA11965.1"/>
    <property type="molecule type" value="Genomic_DNA"/>
</dbReference>
<dbReference type="RefSeq" id="XP_001391969.1">
    <property type="nucleotide sequence ID" value="XM_001391932.3"/>
</dbReference>
<dbReference type="PDB" id="5I77">
    <property type="method" value="X-ray"/>
    <property type="resolution" value="1.80 A"/>
    <property type="chains" value="A=31-330"/>
</dbReference>
<dbReference type="PDB" id="5I78">
    <property type="method" value="X-ray"/>
    <property type="resolution" value="1.58 A"/>
    <property type="chains" value="A/B=31-330"/>
</dbReference>
<dbReference type="PDB" id="5I79">
    <property type="method" value="X-ray"/>
    <property type="resolution" value="2.35 A"/>
    <property type="chains" value="A/B=31-330"/>
</dbReference>
<dbReference type="PDBsum" id="5I77"/>
<dbReference type="PDBsum" id="5I78"/>
<dbReference type="PDBsum" id="5I79"/>
<dbReference type="SMR" id="O74706"/>
<dbReference type="CAZy" id="GH5">
    <property type="family name" value="Glycoside Hydrolase Family 5"/>
</dbReference>
<dbReference type="GlyCosmos" id="O74706">
    <property type="glycosylation" value="4 sites, No reported glycans"/>
</dbReference>
<dbReference type="PaxDb" id="5061-CADANGAP00006047"/>
<dbReference type="EnsemblFungi" id="CAK45103">
    <property type="protein sequence ID" value="CAK45103"/>
    <property type="gene ID" value="An07g08950"/>
</dbReference>
<dbReference type="GeneID" id="4982163"/>
<dbReference type="KEGG" id="ang:An07g08950"/>
<dbReference type="VEuPathDB" id="FungiDB:An07g08950"/>
<dbReference type="VEuPathDB" id="FungiDB:ASPNIDRAFT2_1164595"/>
<dbReference type="VEuPathDB" id="FungiDB:ATCC64974_49560"/>
<dbReference type="VEuPathDB" id="FungiDB:M747DRAFT_268418"/>
<dbReference type="eggNOG" id="ENOG502QXN4">
    <property type="taxonomic scope" value="Eukaryota"/>
</dbReference>
<dbReference type="OrthoDB" id="5823761at2759"/>
<dbReference type="BRENDA" id="3.2.1.4">
    <property type="organism ID" value="518"/>
</dbReference>
<dbReference type="GO" id="GO:0005576">
    <property type="term" value="C:extracellular region"/>
    <property type="evidence" value="ECO:0007669"/>
    <property type="project" value="UniProtKB-SubCell"/>
</dbReference>
<dbReference type="GO" id="GO:0008810">
    <property type="term" value="F:cellulase activity"/>
    <property type="evidence" value="ECO:0007669"/>
    <property type="project" value="UniProtKB-EC"/>
</dbReference>
<dbReference type="GO" id="GO:0030245">
    <property type="term" value="P:cellulose catabolic process"/>
    <property type="evidence" value="ECO:0007669"/>
    <property type="project" value="UniProtKB-KW"/>
</dbReference>
<dbReference type="FunFam" id="3.20.20.80:FF:000078">
    <property type="entry name" value="Endo-beta-1,4-glucanase B"/>
    <property type="match status" value="1"/>
</dbReference>
<dbReference type="Gene3D" id="3.20.20.80">
    <property type="entry name" value="Glycosidases"/>
    <property type="match status" value="1"/>
</dbReference>
<dbReference type="InterPro" id="IPR001547">
    <property type="entry name" value="Glyco_hydro_5"/>
</dbReference>
<dbReference type="InterPro" id="IPR017853">
    <property type="entry name" value="Glycoside_hydrolase_SF"/>
</dbReference>
<dbReference type="PANTHER" id="PTHR34142">
    <property type="entry name" value="ENDO-BETA-1,4-GLUCANASE A"/>
    <property type="match status" value="1"/>
</dbReference>
<dbReference type="PANTHER" id="PTHR34142:SF6">
    <property type="entry name" value="ENDO-BETA-1,4-GLUCANASE B"/>
    <property type="match status" value="1"/>
</dbReference>
<dbReference type="Pfam" id="PF00150">
    <property type="entry name" value="Cellulase"/>
    <property type="match status" value="1"/>
</dbReference>
<dbReference type="SUPFAM" id="SSF51445">
    <property type="entry name" value="(Trans)glycosidases"/>
    <property type="match status" value="1"/>
</dbReference>
<evidence type="ECO:0000250" key="1"/>
<evidence type="ECO:0000255" key="2"/>
<evidence type="ECO:0000269" key="3">
    <source>
    </source>
</evidence>
<evidence type="ECO:0000269" key="4">
    <source>
    </source>
</evidence>
<evidence type="ECO:0000305" key="5"/>
<evidence type="ECO:0007829" key="6">
    <source>
        <dbReference type="PDB" id="5I78"/>
    </source>
</evidence>
<evidence type="ECO:0007829" key="7">
    <source>
        <dbReference type="PDB" id="5I79"/>
    </source>
</evidence>
<name>EGLB_ASPNG</name>
<comment type="function">
    <text evidence="3">Has endoglucanase activity on substrates containing beta-1,4 glycosidic bonds, like in carboxymethylcellulose (CMC), hydroxyethylcellulose (HEC) and beta-glucan. Involved in the degradation of complex natural cellulosic substrates.</text>
</comment>
<comment type="catalytic activity">
    <reaction>
        <text>Endohydrolysis of (1-&gt;4)-beta-D-glucosidic linkages in cellulose, lichenin and cereal beta-D-glucans.</text>
        <dbReference type="EC" id="3.2.1.4"/>
    </reaction>
</comment>
<comment type="biophysicochemical properties">
    <phDependence>
        <text evidence="3">Optimum pH is 6.0.</text>
    </phDependence>
    <temperatureDependence>
        <text evidence="3">Optimum temperature is 70 degrees Celsius.</text>
    </temperatureDependence>
</comment>
<comment type="subcellular location">
    <subcellularLocation>
        <location evidence="1">Secreted</location>
    </subcellularLocation>
</comment>
<comment type="induction">
    <text evidence="4">Expression is under the control of the xylanolytic transcriptional activator xlnR.</text>
</comment>
<comment type="similarity">
    <text evidence="5">Belongs to the glycosyl hydrolase 5 (cellulase A) family.</text>
</comment>